<reference key="1">
    <citation type="journal article" date="1989" name="Plant Cell">
        <title>Coordinate expression of transcriptionally regulated isocitrate lyase and malate synthase genes in Brassica napus L.</title>
        <authorList>
            <person name="Comai L."/>
            <person name="Dietrich R.A."/>
            <person name="Maslyar D.J."/>
            <person name="Baden C.S."/>
            <person name="Harada J.J."/>
        </authorList>
    </citation>
    <scope>NUCLEOTIDE SEQUENCE [MRNA]</scope>
    <scope>DEVELOPMENTAL STAGE</scope>
</reference>
<reference key="2">
    <citation type="journal article" date="1993" name="Mol. Gen. Genet.">
        <title>Two classes of isocitrate lyase genes are expressed during late embryogeny and postgermination in Brassica napus L.</title>
        <authorList>
            <person name="Zhang J.Z."/>
            <person name="Gomez-Pedrozo M."/>
            <person name="Baden C.S."/>
            <person name="Harada J.J."/>
        </authorList>
    </citation>
    <scope>NUCLEOTIDE SEQUENCE [GENOMIC DNA]</scope>
</reference>
<reference key="3">
    <citation type="submission" date="1997-05" db="EMBL/GenBank/DDBJ databases">
        <authorList>
            <person name="Olesen C."/>
            <person name="Thomsen K.K."/>
            <person name="Svendsen I."/>
            <person name="Brandt A."/>
        </authorList>
    </citation>
    <scope>NUCLEOTIDE SEQUENCE [MRNA]</scope>
    <source>
        <strain>cv. Global</strain>
        <tissue>Cotyledon</tissue>
    </source>
</reference>
<comment type="function">
    <text evidence="1">Involved in storage lipid mobilization during the growth of higher plant seedling.</text>
</comment>
<comment type="catalytic activity">
    <reaction evidence="1">
        <text>D-threo-isocitrate = glyoxylate + succinate</text>
        <dbReference type="Rhea" id="RHEA:13245"/>
        <dbReference type="ChEBI" id="CHEBI:15562"/>
        <dbReference type="ChEBI" id="CHEBI:30031"/>
        <dbReference type="ChEBI" id="CHEBI:36655"/>
        <dbReference type="EC" id="4.1.3.1"/>
    </reaction>
</comment>
<comment type="cofactor">
    <cofactor evidence="2">
        <name>Mg(2+)</name>
        <dbReference type="ChEBI" id="CHEBI:18420"/>
    </cofactor>
</comment>
<comment type="pathway">
    <text evidence="1">Carbohydrate metabolism; glyoxylate cycle; (S)-malate from isocitrate: step 1/2.</text>
</comment>
<comment type="subunit">
    <text evidence="1">Homotetramer.</text>
</comment>
<comment type="subcellular location">
    <subcellularLocation>
        <location evidence="1">Glyoxysome</location>
    </subcellularLocation>
</comment>
<comment type="developmental stage">
    <text evidence="4">Expressed maximally during postgerminative growth.</text>
</comment>
<comment type="similarity">
    <text evidence="5">Belongs to the isocitrate lyase/PEP mutase superfamily. Isocitrate lyase family.</text>
</comment>
<name>ACEA_BRANA</name>
<protein>
    <recommendedName>
        <fullName evidence="1">Isocitrate lyase</fullName>
        <shortName evidence="1">ICL</shortName>
        <ecNumber evidence="1">4.1.3.1</ecNumber>
    </recommendedName>
    <alternativeName>
        <fullName evidence="1">Isocitrase</fullName>
    </alternativeName>
    <alternativeName>
        <fullName evidence="1">Isocitratsysase</fullName>
    </alternativeName>
</protein>
<organism>
    <name type="scientific">Brassica napus</name>
    <name type="common">Rape</name>
    <dbReference type="NCBI Taxonomy" id="3708"/>
    <lineage>
        <taxon>Eukaryota</taxon>
        <taxon>Viridiplantae</taxon>
        <taxon>Streptophyta</taxon>
        <taxon>Embryophyta</taxon>
        <taxon>Tracheophyta</taxon>
        <taxon>Spermatophyta</taxon>
        <taxon>Magnoliopsida</taxon>
        <taxon>eudicotyledons</taxon>
        <taxon>Gunneridae</taxon>
        <taxon>Pentapetalae</taxon>
        <taxon>rosids</taxon>
        <taxon>malvids</taxon>
        <taxon>Brassicales</taxon>
        <taxon>Brassicaceae</taxon>
        <taxon>Brassiceae</taxon>
        <taxon>Brassica</taxon>
    </lineage>
</organism>
<proteinExistence type="evidence at transcript level"/>
<sequence length="576" mass="64326">MAASFSVPSMIMEEEGRFEAEVAEVQTWWSSERFKLTRRPYTARDVVALRGHLKQGYASNEMAKKLWRTLKSHQANGTASRTFGALDPVQVTMMAKHLDTIYVSGWQCSSTHTSTNEPGPDLADYPYDTVPNKVEHLFFAQQYHDRKQREARMSMSREERAKTPFVDYLKPIIADGDTGFGGTTATVKLCKLFVERGAAGVHIEDQSSVTKKCGHMAGKVLVAVSEHINRLVAARLQFDVMGTETVLVARTDAVAATLIQSNIDSRDHQFILGVTNPSLRGKSLSSLLAEGMAVGNNGPALQAIEDQWLSSARLMTFSDAVVEALKRMNLSENEKSRRVNEWLNHARYENCLSNEQGRELAAKLGVTDLFWDWDLPRTREGFYRFQGSVTAAVVRGWAFAQIADLIWMETASPDLNECTQFAEGVKSKTPEVMLAYNLSPSFNWDASGMTDQQMMEFIPRIARLGYCWQFITLAGFHADALVVDTFAKDYARRGMLAYVERIQREERSNGVDTLAHQKWSGANYYDRYLKTVQGGISSTAAMGKGVTEEQFKETWTRPGAAGMGEGTSLVVAKSRM</sequence>
<evidence type="ECO:0000250" key="1">
    <source>
        <dbReference type="UniProtKB" id="P28297"/>
    </source>
</evidence>
<evidence type="ECO:0000250" key="2">
    <source>
        <dbReference type="UniProtKB" id="P9WKK7"/>
    </source>
</evidence>
<evidence type="ECO:0000255" key="3"/>
<evidence type="ECO:0000269" key="4">
    <source>
    </source>
</evidence>
<evidence type="ECO:0000305" key="5"/>
<feature type="chain" id="PRO_0000068802" description="Isocitrate lyase">
    <location>
        <begin position="1"/>
        <end position="576"/>
    </location>
</feature>
<feature type="short sequence motif" description="Microbody targeting signal" evidence="3">
    <location>
        <begin position="574"/>
        <end position="576"/>
    </location>
</feature>
<feature type="active site" description="Proton acceptor" evidence="2">
    <location>
        <position position="213"/>
    </location>
</feature>
<feature type="binding site" evidence="2">
    <location>
        <begin position="104"/>
        <end position="106"/>
    </location>
    <ligand>
        <name>substrate</name>
    </ligand>
</feature>
<feature type="binding site" evidence="2">
    <location>
        <position position="175"/>
    </location>
    <ligand>
        <name>Mg(2+)</name>
        <dbReference type="ChEBI" id="CHEBI:18420"/>
    </ligand>
</feature>
<feature type="binding site" evidence="2">
    <location>
        <begin position="214"/>
        <end position="215"/>
    </location>
    <ligand>
        <name>substrate</name>
    </ligand>
</feature>
<feature type="binding site" evidence="2">
    <location>
        <position position="250"/>
    </location>
    <ligand>
        <name>substrate</name>
    </ligand>
</feature>
<feature type="binding site" evidence="2">
    <location>
        <begin position="437"/>
        <end position="441"/>
    </location>
    <ligand>
        <name>substrate</name>
    </ligand>
</feature>
<feature type="binding site" evidence="2">
    <location>
        <position position="472"/>
    </location>
    <ligand>
        <name>substrate</name>
    </ligand>
</feature>
<feature type="sequence conflict" description="In Ref. 3; CAA73792." evidence="5" ref="3">
    <original>A</original>
    <variation>V</variation>
    <location>
        <position position="75"/>
    </location>
</feature>
<feature type="sequence conflict" description="In Ref. 3; CAA73792." evidence="5" ref="3">
    <original>D</original>
    <variation>G</variation>
    <location>
        <position position="177"/>
    </location>
</feature>
<feature type="sequence conflict" description="In Ref. 3; CAA73792." evidence="5" ref="3">
    <original>A</original>
    <variation>P</variation>
    <location>
        <position position="256"/>
    </location>
</feature>
<feature type="sequence conflict" description="In Ref. 3; CAA73792." evidence="5" ref="3">
    <original>S</original>
    <variation>N</variation>
    <location>
        <position position="278"/>
    </location>
</feature>
<feature type="sequence conflict" description="In Ref. 3; CAA73792." evidence="5" ref="3">
    <original>N</original>
    <variation>T</variation>
    <location>
        <position position="340"/>
    </location>
</feature>
<feature type="sequence conflict" description="In Ref. 3; CAA73792." evidence="5" ref="3">
    <original>N</original>
    <variation>I</variation>
    <location>
        <position position="344"/>
    </location>
</feature>
<accession>P25248</accession>
<accession>O04910</accession>
<dbReference type="EC" id="4.1.3.1" evidence="1"/>
<dbReference type="EMBL" id="L08482">
    <property type="protein sequence ID" value="AAA32992.1"/>
    <property type="molecule type" value="Genomic_DNA"/>
</dbReference>
<dbReference type="EMBL" id="Y13356">
    <property type="protein sequence ID" value="CAA73792.1"/>
    <property type="molecule type" value="mRNA"/>
</dbReference>
<dbReference type="PIR" id="JQ1105">
    <property type="entry name" value="WZRPI"/>
</dbReference>
<dbReference type="RefSeq" id="NP_001302775.1">
    <property type="nucleotide sequence ID" value="NM_001315846.1"/>
</dbReference>
<dbReference type="SMR" id="P25248"/>
<dbReference type="GeneID" id="106389063"/>
<dbReference type="KEGG" id="bna:106389063"/>
<dbReference type="OrthoDB" id="1051418at2759"/>
<dbReference type="UniPathway" id="UPA00703">
    <property type="reaction ID" value="UER00719"/>
</dbReference>
<dbReference type="GO" id="GO:0009514">
    <property type="term" value="C:glyoxysome"/>
    <property type="evidence" value="ECO:0007669"/>
    <property type="project" value="UniProtKB-SubCell"/>
</dbReference>
<dbReference type="GO" id="GO:0004451">
    <property type="term" value="F:isocitrate lyase activity"/>
    <property type="evidence" value="ECO:0007669"/>
    <property type="project" value="UniProtKB-EC"/>
</dbReference>
<dbReference type="GO" id="GO:0046872">
    <property type="term" value="F:metal ion binding"/>
    <property type="evidence" value="ECO:0007669"/>
    <property type="project" value="UniProtKB-KW"/>
</dbReference>
<dbReference type="GO" id="GO:0006097">
    <property type="term" value="P:glyoxylate cycle"/>
    <property type="evidence" value="ECO:0007669"/>
    <property type="project" value="UniProtKB-UniPathway"/>
</dbReference>
<dbReference type="GO" id="GO:0006099">
    <property type="term" value="P:tricarboxylic acid cycle"/>
    <property type="evidence" value="ECO:0007669"/>
    <property type="project" value="UniProtKB-KW"/>
</dbReference>
<dbReference type="CDD" id="cd00377">
    <property type="entry name" value="ICL_PEPM"/>
    <property type="match status" value="1"/>
</dbReference>
<dbReference type="FunFam" id="1.10.10.850:FF:000001">
    <property type="entry name" value="Isocitrate lyase"/>
    <property type="match status" value="1"/>
</dbReference>
<dbReference type="Gene3D" id="1.10.10.850">
    <property type="match status" value="1"/>
</dbReference>
<dbReference type="Gene3D" id="3.20.20.60">
    <property type="entry name" value="Phosphoenolpyruvate-binding domains"/>
    <property type="match status" value="1"/>
</dbReference>
<dbReference type="InterPro" id="IPR039556">
    <property type="entry name" value="ICL/PEPM"/>
</dbReference>
<dbReference type="InterPro" id="IPR006254">
    <property type="entry name" value="Isocitrate_lyase"/>
</dbReference>
<dbReference type="InterPro" id="IPR018523">
    <property type="entry name" value="Isocitrate_lyase_ph_CS"/>
</dbReference>
<dbReference type="InterPro" id="IPR015813">
    <property type="entry name" value="Pyrv/PenolPyrv_kinase-like_dom"/>
</dbReference>
<dbReference type="InterPro" id="IPR040442">
    <property type="entry name" value="Pyrv_kinase-like_dom_sf"/>
</dbReference>
<dbReference type="NCBIfam" id="TIGR01346">
    <property type="entry name" value="isocit_lyase"/>
    <property type="match status" value="1"/>
</dbReference>
<dbReference type="PANTHER" id="PTHR21631:SF3">
    <property type="entry name" value="BIFUNCTIONAL GLYOXYLATE CYCLE PROTEIN"/>
    <property type="match status" value="1"/>
</dbReference>
<dbReference type="PANTHER" id="PTHR21631">
    <property type="entry name" value="ISOCITRATE LYASE/MALATE SYNTHASE"/>
    <property type="match status" value="1"/>
</dbReference>
<dbReference type="Pfam" id="PF00463">
    <property type="entry name" value="ICL"/>
    <property type="match status" value="1"/>
</dbReference>
<dbReference type="PIRSF" id="PIRSF001362">
    <property type="entry name" value="Isocit_lyase"/>
    <property type="match status" value="1"/>
</dbReference>
<dbReference type="SUPFAM" id="SSF51621">
    <property type="entry name" value="Phosphoenolpyruvate/pyruvate domain"/>
    <property type="match status" value="1"/>
</dbReference>
<dbReference type="PROSITE" id="PS00161">
    <property type="entry name" value="ISOCITRATE_LYASE"/>
    <property type="match status" value="1"/>
</dbReference>
<keyword id="KW-0329">Glyoxylate bypass</keyword>
<keyword id="KW-0330">Glyoxysome</keyword>
<keyword id="KW-0456">Lyase</keyword>
<keyword id="KW-0460">Magnesium</keyword>
<keyword id="KW-0479">Metal-binding</keyword>
<keyword id="KW-0576">Peroxisome</keyword>
<keyword id="KW-0816">Tricarboxylic acid cycle</keyword>